<protein>
    <recommendedName>
        <fullName evidence="1">Small ribosomal subunit protein uS15</fullName>
    </recommendedName>
    <alternativeName>
        <fullName evidence="2">30S ribosomal protein S15</fullName>
    </alternativeName>
</protein>
<comment type="function">
    <text evidence="1">One of the primary rRNA binding proteins, it binds directly to 16S rRNA where it helps nucleate assembly of the platform of the 30S subunit by binding and bridging several RNA helices of the 16S rRNA.</text>
</comment>
<comment type="function">
    <text evidence="1">Forms an intersubunit bridge (bridge B4) with the 23S rRNA of the 50S subunit in the ribosome.</text>
</comment>
<comment type="subunit">
    <text evidence="1">Part of the 30S ribosomal subunit. Forms a bridge to the 50S subunit in the 70S ribosome, contacting the 23S rRNA.</text>
</comment>
<comment type="similarity">
    <text evidence="1">Belongs to the universal ribosomal protein uS15 family.</text>
</comment>
<feature type="chain" id="PRO_1000143194" description="Small ribosomal subunit protein uS15">
    <location>
        <begin position="1"/>
        <end position="89"/>
    </location>
</feature>
<reference key="1">
    <citation type="submission" date="2007-07" db="EMBL/GenBank/DDBJ databases">
        <title>Complete sequence of chromosome of Xanthobacter autotrophicus Py2.</title>
        <authorList>
            <consortium name="US DOE Joint Genome Institute"/>
            <person name="Copeland A."/>
            <person name="Lucas S."/>
            <person name="Lapidus A."/>
            <person name="Barry K."/>
            <person name="Glavina del Rio T."/>
            <person name="Hammon N."/>
            <person name="Israni S."/>
            <person name="Dalin E."/>
            <person name="Tice H."/>
            <person name="Pitluck S."/>
            <person name="Sims D."/>
            <person name="Brettin T."/>
            <person name="Bruce D."/>
            <person name="Detter J.C."/>
            <person name="Han C."/>
            <person name="Tapia R."/>
            <person name="Brainard J."/>
            <person name="Schmutz J."/>
            <person name="Larimer F."/>
            <person name="Land M."/>
            <person name="Hauser L."/>
            <person name="Kyrpides N."/>
            <person name="Kim E."/>
            <person name="Ensigns S.A."/>
            <person name="Richardson P."/>
        </authorList>
    </citation>
    <scope>NUCLEOTIDE SEQUENCE [LARGE SCALE GENOMIC DNA]</scope>
    <source>
        <strain>ATCC BAA-1158 / Py2</strain>
    </source>
</reference>
<proteinExistence type="inferred from homology"/>
<organism>
    <name type="scientific">Xanthobacter autotrophicus (strain ATCC BAA-1158 / Py2)</name>
    <dbReference type="NCBI Taxonomy" id="78245"/>
    <lineage>
        <taxon>Bacteria</taxon>
        <taxon>Pseudomonadati</taxon>
        <taxon>Pseudomonadota</taxon>
        <taxon>Alphaproteobacteria</taxon>
        <taxon>Hyphomicrobiales</taxon>
        <taxon>Xanthobacteraceae</taxon>
        <taxon>Xanthobacter</taxon>
    </lineage>
</organism>
<evidence type="ECO:0000255" key="1">
    <source>
        <dbReference type="HAMAP-Rule" id="MF_01343"/>
    </source>
</evidence>
<evidence type="ECO:0000305" key="2"/>
<sequence>MSITAERKQALIKDFGAKDGDTGSPEVQVAILTERITNLTGHFKSHHKDNHSRRGLLKLVSQRRSLLDYLKKKDEGRYKSLIERLGIRR</sequence>
<name>RS15_XANP2</name>
<accession>A7IC04</accession>
<keyword id="KW-1185">Reference proteome</keyword>
<keyword id="KW-0687">Ribonucleoprotein</keyword>
<keyword id="KW-0689">Ribosomal protein</keyword>
<keyword id="KW-0694">RNA-binding</keyword>
<keyword id="KW-0699">rRNA-binding</keyword>
<dbReference type="EMBL" id="CP000781">
    <property type="protein sequence ID" value="ABS65547.1"/>
    <property type="molecule type" value="Genomic_DNA"/>
</dbReference>
<dbReference type="SMR" id="A7IC04"/>
<dbReference type="STRING" id="78245.Xaut_0289"/>
<dbReference type="KEGG" id="xau:Xaut_0289"/>
<dbReference type="eggNOG" id="COG0184">
    <property type="taxonomic scope" value="Bacteria"/>
</dbReference>
<dbReference type="HOGENOM" id="CLU_148518_0_0_5"/>
<dbReference type="OrthoDB" id="9799262at2"/>
<dbReference type="PhylomeDB" id="A7IC04"/>
<dbReference type="Proteomes" id="UP000002417">
    <property type="component" value="Chromosome"/>
</dbReference>
<dbReference type="GO" id="GO:0022627">
    <property type="term" value="C:cytosolic small ribosomal subunit"/>
    <property type="evidence" value="ECO:0007669"/>
    <property type="project" value="TreeGrafter"/>
</dbReference>
<dbReference type="GO" id="GO:0019843">
    <property type="term" value="F:rRNA binding"/>
    <property type="evidence" value="ECO:0007669"/>
    <property type="project" value="UniProtKB-UniRule"/>
</dbReference>
<dbReference type="GO" id="GO:0003735">
    <property type="term" value="F:structural constituent of ribosome"/>
    <property type="evidence" value="ECO:0007669"/>
    <property type="project" value="InterPro"/>
</dbReference>
<dbReference type="GO" id="GO:0006412">
    <property type="term" value="P:translation"/>
    <property type="evidence" value="ECO:0007669"/>
    <property type="project" value="UniProtKB-UniRule"/>
</dbReference>
<dbReference type="CDD" id="cd00353">
    <property type="entry name" value="Ribosomal_S15p_S13e"/>
    <property type="match status" value="1"/>
</dbReference>
<dbReference type="FunFam" id="1.10.287.10:FF:000002">
    <property type="entry name" value="30S ribosomal protein S15"/>
    <property type="match status" value="1"/>
</dbReference>
<dbReference type="Gene3D" id="6.10.250.3130">
    <property type="match status" value="1"/>
</dbReference>
<dbReference type="Gene3D" id="1.10.287.10">
    <property type="entry name" value="S15/NS1, RNA-binding"/>
    <property type="match status" value="1"/>
</dbReference>
<dbReference type="HAMAP" id="MF_01343_B">
    <property type="entry name" value="Ribosomal_uS15_B"/>
    <property type="match status" value="1"/>
</dbReference>
<dbReference type="InterPro" id="IPR000589">
    <property type="entry name" value="Ribosomal_uS15"/>
</dbReference>
<dbReference type="InterPro" id="IPR005290">
    <property type="entry name" value="Ribosomal_uS15_bac-type"/>
</dbReference>
<dbReference type="InterPro" id="IPR009068">
    <property type="entry name" value="uS15_NS1_RNA-bd_sf"/>
</dbReference>
<dbReference type="NCBIfam" id="TIGR00952">
    <property type="entry name" value="S15_bact"/>
    <property type="match status" value="1"/>
</dbReference>
<dbReference type="PANTHER" id="PTHR23321">
    <property type="entry name" value="RIBOSOMAL PROTEIN S15, BACTERIAL AND ORGANELLAR"/>
    <property type="match status" value="1"/>
</dbReference>
<dbReference type="PANTHER" id="PTHR23321:SF26">
    <property type="entry name" value="SMALL RIBOSOMAL SUBUNIT PROTEIN US15M"/>
    <property type="match status" value="1"/>
</dbReference>
<dbReference type="Pfam" id="PF00312">
    <property type="entry name" value="Ribosomal_S15"/>
    <property type="match status" value="1"/>
</dbReference>
<dbReference type="SMART" id="SM01387">
    <property type="entry name" value="Ribosomal_S15"/>
    <property type="match status" value="1"/>
</dbReference>
<dbReference type="SUPFAM" id="SSF47060">
    <property type="entry name" value="S15/NS1 RNA-binding domain"/>
    <property type="match status" value="1"/>
</dbReference>
<dbReference type="PROSITE" id="PS00362">
    <property type="entry name" value="RIBOSOMAL_S15"/>
    <property type="match status" value="1"/>
</dbReference>
<gene>
    <name evidence="1" type="primary">rpsO</name>
    <name type="ordered locus">Xaut_0289</name>
</gene>